<name>RL36_THELE</name>
<gene>
    <name type="primary">RPL35</name>
</gene>
<sequence>MEKLRVFELRDKSDAELLKLLDDLKQELATFRVSKVTATGTSKLSKITLVRKAVAKVLTVYNQRKKEEARKKYKKLSKTPLNLRPKLTRAKRKALTTKQLTMKTIKERKRAENLPKRKYALLA</sequence>
<accession>Q2VA69</accession>
<comment type="similarity">
    <text evidence="1">Belongs to the universal ribosomal protein uL29 family.</text>
</comment>
<reference key="1">
    <citation type="submission" date="2005-11" db="EMBL/GenBank/DDBJ databases">
        <title>Random sequencing of a Theileria lestoquardi schizont cDNA bank.</title>
        <authorList>
            <person name="Bakheit M.A."/>
            <person name="Seitzer U."/>
            <person name="Ahmed J.S."/>
        </authorList>
    </citation>
    <scope>NUCLEOTIDE SEQUENCE [MRNA]</scope>
</reference>
<protein>
    <recommendedName>
        <fullName evidence="1">Large ribosomal subunit protein uL29</fullName>
    </recommendedName>
    <alternativeName>
        <fullName>60S ribosomal protein L35</fullName>
    </alternativeName>
</protein>
<keyword id="KW-0687">Ribonucleoprotein</keyword>
<keyword id="KW-0689">Ribosomal protein</keyword>
<evidence type="ECO:0000305" key="1"/>
<organism>
    <name type="scientific">Theileria lestoquardi</name>
    <dbReference type="NCBI Taxonomy" id="77054"/>
    <lineage>
        <taxon>Eukaryota</taxon>
        <taxon>Sar</taxon>
        <taxon>Alveolata</taxon>
        <taxon>Apicomplexa</taxon>
        <taxon>Aconoidasida</taxon>
        <taxon>Piroplasmida</taxon>
        <taxon>Theileriidae</taxon>
        <taxon>Theileria</taxon>
    </lineage>
</organism>
<feature type="chain" id="PRO_0000232713" description="Large ribosomal subunit protein uL29">
    <location>
        <begin position="1"/>
        <end position="123"/>
    </location>
</feature>
<dbReference type="EMBL" id="DQ278174">
    <property type="protein sequence ID" value="ABB86778.1"/>
    <property type="molecule type" value="mRNA"/>
</dbReference>
<dbReference type="SMR" id="Q2VA69"/>
<dbReference type="GO" id="GO:0022625">
    <property type="term" value="C:cytosolic large ribosomal subunit"/>
    <property type="evidence" value="ECO:0007669"/>
    <property type="project" value="InterPro"/>
</dbReference>
<dbReference type="GO" id="GO:0003729">
    <property type="term" value="F:mRNA binding"/>
    <property type="evidence" value="ECO:0007669"/>
    <property type="project" value="TreeGrafter"/>
</dbReference>
<dbReference type="GO" id="GO:0003735">
    <property type="term" value="F:structural constituent of ribosome"/>
    <property type="evidence" value="ECO:0007669"/>
    <property type="project" value="InterPro"/>
</dbReference>
<dbReference type="GO" id="GO:0000463">
    <property type="term" value="P:maturation of LSU-rRNA from tricistronic rRNA transcript (SSU-rRNA, 5.8S rRNA, LSU-rRNA)"/>
    <property type="evidence" value="ECO:0007669"/>
    <property type="project" value="InterPro"/>
</dbReference>
<dbReference type="GO" id="GO:0006412">
    <property type="term" value="P:translation"/>
    <property type="evidence" value="ECO:0007669"/>
    <property type="project" value="InterPro"/>
</dbReference>
<dbReference type="FunFam" id="1.10.287.310:FF:000002">
    <property type="entry name" value="60S ribosomal protein L35"/>
    <property type="match status" value="1"/>
</dbReference>
<dbReference type="Gene3D" id="1.10.287.310">
    <property type="match status" value="1"/>
</dbReference>
<dbReference type="Gene3D" id="6.10.250.3450">
    <property type="match status" value="1"/>
</dbReference>
<dbReference type="HAMAP" id="MF_00374">
    <property type="entry name" value="Ribosomal_uL29"/>
    <property type="match status" value="1"/>
</dbReference>
<dbReference type="InterPro" id="IPR001854">
    <property type="entry name" value="Ribosomal_uL29"/>
</dbReference>
<dbReference type="InterPro" id="IPR045059">
    <property type="entry name" value="Ribosomal_uL29_euk"/>
</dbReference>
<dbReference type="InterPro" id="IPR036049">
    <property type="entry name" value="Ribosomal_uL29_sf"/>
</dbReference>
<dbReference type="NCBIfam" id="TIGR00012">
    <property type="entry name" value="L29"/>
    <property type="match status" value="1"/>
</dbReference>
<dbReference type="PANTHER" id="PTHR45722">
    <property type="entry name" value="60S RIBOSOMAL PROTEIN L35"/>
    <property type="match status" value="1"/>
</dbReference>
<dbReference type="PANTHER" id="PTHR45722:SF2">
    <property type="entry name" value="LARGE RIBOSOMAL SUBUNIT PROTEIN UL29-RELATED"/>
    <property type="match status" value="1"/>
</dbReference>
<dbReference type="Pfam" id="PF00831">
    <property type="entry name" value="Ribosomal_L29"/>
    <property type="match status" value="1"/>
</dbReference>
<dbReference type="SUPFAM" id="SSF46561">
    <property type="entry name" value="Ribosomal protein L29 (L29p)"/>
    <property type="match status" value="1"/>
</dbReference>
<proteinExistence type="evidence at transcript level"/>